<sequence length="328" mass="35377">MSTSSINGFSLSSLSPAKTSTKRTTLRPFVSASLNTSSSSSSSTFPSLIQDKPVFASSSPIITPVLREEMGKGYDEAIEELQKLLREKTELKATAAEKVEQITAQLGTTSSSDGIPKSEASERIKTGFLHFKKEKYDKNPALYGELAKGQSPPFMVFACSDSRVCPSHVLDFQPGEAFVVRNVANLVPPYDQAKYAGTGAAIEYAVLHLKVSNIVVIGHSACGGIKGLLSFPFDGTYSTDFIEEWVKIGLPAKAKVKAQHGDAPFAELCTHCEKEAVNASLGNLLTYPFVREGLVNKTLALKGGYYDFVKGSFELWGLEFGLSSTFSV</sequence>
<organism>
    <name type="scientific">Pisum sativum</name>
    <name type="common">Garden pea</name>
    <name type="synonym">Lathyrus oleraceus</name>
    <dbReference type="NCBI Taxonomy" id="3888"/>
    <lineage>
        <taxon>Eukaryota</taxon>
        <taxon>Viridiplantae</taxon>
        <taxon>Streptophyta</taxon>
        <taxon>Embryophyta</taxon>
        <taxon>Tracheophyta</taxon>
        <taxon>Spermatophyta</taxon>
        <taxon>Magnoliopsida</taxon>
        <taxon>eudicotyledons</taxon>
        <taxon>Gunneridae</taxon>
        <taxon>Pentapetalae</taxon>
        <taxon>rosids</taxon>
        <taxon>fabids</taxon>
        <taxon>Fabales</taxon>
        <taxon>Fabaceae</taxon>
        <taxon>Papilionoideae</taxon>
        <taxon>50 kb inversion clade</taxon>
        <taxon>NPAAA clade</taxon>
        <taxon>Hologalegina</taxon>
        <taxon>IRL clade</taxon>
        <taxon>Fabeae</taxon>
        <taxon>Pisum</taxon>
    </lineage>
</organism>
<evidence type="ECO:0000256" key="1">
    <source>
        <dbReference type="SAM" id="MobiDB-lite"/>
    </source>
</evidence>
<evidence type="ECO:0000269" key="2">
    <source>
    </source>
</evidence>
<evidence type="ECO:0000269" key="3">
    <source>
    </source>
</evidence>
<evidence type="ECO:0000305" key="4"/>
<evidence type="ECO:0007829" key="5">
    <source>
        <dbReference type="PDB" id="1EKJ"/>
    </source>
</evidence>
<protein>
    <recommendedName>
        <fullName>Carbonic anhydrase, chloroplastic</fullName>
        <ecNumber>4.2.1.1</ecNumber>
    </recommendedName>
    <alternativeName>
        <fullName>Carbonate dehydratase</fullName>
    </alternativeName>
    <component>
        <recommendedName>
            <fullName>Carbonic anhydrase, 27 kDa isoform</fullName>
        </recommendedName>
    </component>
    <component>
        <recommendedName>
            <fullName>Carbonic anhydrase, 25 kDa isoform</fullName>
        </recommendedName>
    </component>
</protein>
<reference key="1">
    <citation type="journal article" date="1990" name="Nucleic Acids Res.">
        <title>Nucleotide sequence of pea cDNA encoding chloroplast carbonic anhydrase.</title>
        <authorList>
            <person name="Roeske C.A."/>
            <person name="Ogren W.L."/>
        </authorList>
    </citation>
    <scope>NUCLEOTIDE SEQUENCE [MRNA]</scope>
    <scope>PARTIAL PROTEIN SEQUENCE</scope>
</reference>
<reference key="2">
    <citation type="journal article" date="1991" name="Plant Physiol.">
        <title>Isolation and characterization of a cDNA coding for pea chloroplastic carbonic anhydrase.</title>
        <authorList>
            <person name="Majeau N."/>
            <person name="Coleman J.R."/>
        </authorList>
    </citation>
    <scope>NUCLEOTIDE SEQUENCE [MRNA]</scope>
</reference>
<reference key="3">
    <citation type="journal article" date="1992" name="FEBS Lett.">
        <title>Processing of the chloroplast transit peptide of pea carbonic anhydrase in chloroplasts and in Escherichia coli. Identification of two cleavage sites.</title>
        <authorList>
            <person name="Johansson I.-M."/>
            <person name="Forsman C."/>
        </authorList>
    </citation>
    <scope>PROTEIN SEQUENCE OF 71-76 AND 108-113</scope>
    <scope>PROTEOLYTIC PROCESSING</scope>
</reference>
<reference key="4">
    <citation type="journal article" date="1993" name="Plant Mol. Biol.">
        <title>Characterization of pea chloroplastic carbonic anhydrase. Expression in Escherichia coli and site-directed mutagenesis.</title>
        <authorList>
            <person name="Provart N.J."/>
            <person name="Majeau N."/>
            <person name="Coleman J.R."/>
        </authorList>
    </citation>
    <scope>MUTAGENESIS</scope>
</reference>
<reference key="5">
    <citation type="journal article" date="2000" name="EMBO J.">
        <title>The active site architecture of Pisum sativum beta-carbonic anhydrase is a mirror image of that of alpha-carbonic anhydrases.</title>
        <authorList>
            <person name="Kimber M.S."/>
            <person name="Pai E.F."/>
        </authorList>
    </citation>
    <scope>X-RAY CRYSTALLOGRAPHY (1.93 ANGSTROMS) OF 108-328</scope>
</reference>
<keyword id="KW-0002">3D-structure</keyword>
<keyword id="KW-0150">Chloroplast</keyword>
<keyword id="KW-0903">Direct protein sequencing</keyword>
<keyword id="KW-0456">Lyase</keyword>
<keyword id="KW-0934">Plastid</keyword>
<keyword id="KW-0809">Transit peptide</keyword>
<keyword id="KW-0862">Zinc</keyword>
<feature type="transit peptide" description="Chloroplast" evidence="2">
    <location>
        <begin position="1"/>
        <end position="70"/>
    </location>
</feature>
<feature type="chain" id="PRO_0000004269" description="Carbonic anhydrase, 27 kDa isoform">
    <location>
        <begin position="71"/>
        <end position="328"/>
    </location>
</feature>
<feature type="chain" id="PRO_0000004270" description="Carbonic anhydrase, 25 kDa isoform">
    <location>
        <begin position="108"/>
        <end position="328"/>
    </location>
</feature>
<feature type="region of interest" description="Disordered" evidence="1">
    <location>
        <begin position="1"/>
        <end position="26"/>
    </location>
</feature>
<feature type="compositionally biased region" description="Low complexity" evidence="1">
    <location>
        <begin position="1"/>
        <end position="15"/>
    </location>
</feature>
<feature type="mutagenesis site" description="100% loss of activity." evidence="3">
    <original>C</original>
    <variation>S</variation>
    <location>
        <position position="159"/>
    </location>
</feature>
<feature type="mutagenesis site" description="Small loss of activity." evidence="3">
    <original>H</original>
    <variation>N</variation>
    <location>
        <position position="168"/>
    </location>
</feature>
<feature type="mutagenesis site" description="100% loss of activity." evidence="3">
    <original>E</original>
    <variation>A</variation>
    <location>
        <position position="203"/>
    </location>
</feature>
<feature type="mutagenesis site" description="Small loss of activity." evidence="3">
    <original>H</original>
    <variation>N</variation>
    <location>
        <position position="208"/>
    </location>
</feature>
<feature type="mutagenesis site" description="100% loss of activity." evidence="3">
    <original>H</original>
    <variation>N</variation>
    <location>
        <position position="219"/>
    </location>
</feature>
<feature type="mutagenesis site" description="100% loss of activity." evidence="3">
    <original>C</original>
    <variation>S</variation>
    <location>
        <position position="222"/>
    </location>
</feature>
<feature type="mutagenesis site" description="Small loss of activity." evidence="3">
    <original>E</original>
    <variation>A</variation>
    <location>
        <position position="275"/>
    </location>
</feature>
<feature type="sequence conflict" description="In Ref. 2; AAA33652." evidence="4" ref="2">
    <original>S</original>
    <variation>F</variation>
    <location>
        <position position="31"/>
    </location>
</feature>
<feature type="sequence conflict" description="In Ref. 2; AAA33652." evidence="4" ref="2">
    <original>S</original>
    <variation>SS</variation>
    <location>
        <position position="43"/>
    </location>
</feature>
<feature type="sequence conflict" description="In Ref. 2; AAA33652." evidence="4" ref="2">
    <original>E</original>
    <variation>K</variation>
    <location>
        <position position="176"/>
    </location>
</feature>
<feature type="helix" evidence="5">
    <location>
        <begin position="120"/>
        <end position="134"/>
    </location>
</feature>
<feature type="turn" evidence="5">
    <location>
        <begin position="135"/>
        <end position="137"/>
    </location>
</feature>
<feature type="helix" evidence="5">
    <location>
        <begin position="140"/>
        <end position="146"/>
    </location>
</feature>
<feature type="strand" evidence="5">
    <location>
        <begin position="153"/>
        <end position="159"/>
    </location>
</feature>
<feature type="helix" evidence="5">
    <location>
        <begin position="162"/>
        <end position="164"/>
    </location>
</feature>
<feature type="helix" evidence="5">
    <location>
        <begin position="166"/>
        <end position="169"/>
    </location>
</feature>
<feature type="strand" evidence="5">
    <location>
        <begin position="176"/>
        <end position="182"/>
    </location>
</feature>
<feature type="helix" evidence="5">
    <location>
        <begin position="183"/>
        <end position="185"/>
    </location>
</feature>
<feature type="turn" evidence="5">
    <location>
        <begin position="192"/>
        <end position="194"/>
    </location>
</feature>
<feature type="helix" evidence="5">
    <location>
        <begin position="196"/>
        <end position="207"/>
    </location>
</feature>
<feature type="strand" evidence="5">
    <location>
        <begin position="212"/>
        <end position="221"/>
    </location>
</feature>
<feature type="helix" evidence="5">
    <location>
        <begin position="223"/>
        <end position="230"/>
    </location>
</feature>
<feature type="strand" evidence="5">
    <location>
        <begin position="239"/>
        <end position="241"/>
    </location>
</feature>
<feature type="helix" evidence="5">
    <location>
        <begin position="242"/>
        <end position="246"/>
    </location>
</feature>
<feature type="helix" evidence="5">
    <location>
        <begin position="247"/>
        <end position="249"/>
    </location>
</feature>
<feature type="helix" evidence="5">
    <location>
        <begin position="250"/>
        <end position="259"/>
    </location>
</feature>
<feature type="helix" evidence="5">
    <location>
        <begin position="265"/>
        <end position="284"/>
    </location>
</feature>
<feature type="helix" evidence="5">
    <location>
        <begin position="288"/>
        <end position="295"/>
    </location>
</feature>
<feature type="strand" evidence="5">
    <location>
        <begin position="300"/>
        <end position="307"/>
    </location>
</feature>
<feature type="turn" evidence="5">
    <location>
        <begin position="308"/>
        <end position="311"/>
    </location>
</feature>
<feature type="strand" evidence="5">
    <location>
        <begin position="312"/>
        <end position="318"/>
    </location>
</feature>
<proteinExistence type="evidence at protein level"/>
<name>CAHC_PEA</name>
<comment type="function">
    <text>Reversible hydration of carbon dioxide.</text>
</comment>
<comment type="catalytic activity">
    <reaction>
        <text>hydrogencarbonate + H(+) = CO2 + H2O</text>
        <dbReference type="Rhea" id="RHEA:10748"/>
        <dbReference type="ChEBI" id="CHEBI:15377"/>
        <dbReference type="ChEBI" id="CHEBI:15378"/>
        <dbReference type="ChEBI" id="CHEBI:16526"/>
        <dbReference type="ChEBI" id="CHEBI:17544"/>
        <dbReference type="EC" id="4.2.1.1"/>
    </reaction>
</comment>
<comment type="subunit">
    <text>Homohexamer.</text>
</comment>
<comment type="subcellular location">
    <subcellularLocation>
        <location>Plastid</location>
        <location>Chloroplast stroma</location>
    </subcellularLocation>
</comment>
<comment type="similarity">
    <text evidence="4">Belongs to the beta-class carbonic anhydrase family.</text>
</comment>
<dbReference type="EC" id="4.2.1.1"/>
<dbReference type="EMBL" id="X52558">
    <property type="protein sequence ID" value="CAA36792.1"/>
    <property type="molecule type" value="mRNA"/>
</dbReference>
<dbReference type="EMBL" id="M63627">
    <property type="protein sequence ID" value="AAA33652.1"/>
    <property type="molecule type" value="mRNA"/>
</dbReference>
<dbReference type="PIR" id="S10200">
    <property type="entry name" value="S10200"/>
</dbReference>
<dbReference type="RefSeq" id="NP_001414311.1">
    <property type="nucleotide sequence ID" value="NM_001427382.1"/>
</dbReference>
<dbReference type="PDB" id="1EKJ">
    <property type="method" value="X-ray"/>
    <property type="resolution" value="1.93 A"/>
    <property type="chains" value="A/B/C/D/E/F/G/H=108-328"/>
</dbReference>
<dbReference type="PDBsum" id="1EKJ"/>
<dbReference type="SMR" id="P17067"/>
<dbReference type="EnsemblPlants" id="Psat1g058960.3">
    <property type="protein sequence ID" value="Psat1g058960.3.cds"/>
    <property type="gene ID" value="Psat1g058960"/>
</dbReference>
<dbReference type="EnsemblPlants" id="Psat1g058960.4">
    <property type="protein sequence ID" value="Psat1g058960.4.cds"/>
    <property type="gene ID" value="Psat1g058960"/>
</dbReference>
<dbReference type="EnsemblPlants" id="Psat1g058960.5">
    <property type="protein sequence ID" value="Psat1g058960.5.cds"/>
    <property type="gene ID" value="Psat1g058960"/>
</dbReference>
<dbReference type="GeneID" id="127119628"/>
<dbReference type="Gramene" id="Psat1g058960.3">
    <property type="protein sequence ID" value="Psat1g058960.3.cds"/>
    <property type="gene ID" value="Psat1g058960"/>
</dbReference>
<dbReference type="Gramene" id="Psat1g058960.4">
    <property type="protein sequence ID" value="Psat1g058960.4.cds"/>
    <property type="gene ID" value="Psat1g058960"/>
</dbReference>
<dbReference type="Gramene" id="Psat1g058960.5">
    <property type="protein sequence ID" value="Psat1g058960.5.cds"/>
    <property type="gene ID" value="Psat1g058960"/>
</dbReference>
<dbReference type="BRENDA" id="4.2.1.1">
    <property type="organism ID" value="4872"/>
</dbReference>
<dbReference type="EvolutionaryTrace" id="P17067"/>
<dbReference type="GO" id="GO:0009570">
    <property type="term" value="C:chloroplast stroma"/>
    <property type="evidence" value="ECO:0007669"/>
    <property type="project" value="UniProtKB-SubCell"/>
</dbReference>
<dbReference type="GO" id="GO:0004089">
    <property type="term" value="F:carbonate dehydratase activity"/>
    <property type="evidence" value="ECO:0007669"/>
    <property type="project" value="UniProtKB-EC"/>
</dbReference>
<dbReference type="GO" id="GO:0008270">
    <property type="term" value="F:zinc ion binding"/>
    <property type="evidence" value="ECO:0007669"/>
    <property type="project" value="InterPro"/>
</dbReference>
<dbReference type="GO" id="GO:0015976">
    <property type="term" value="P:carbon utilization"/>
    <property type="evidence" value="ECO:0007669"/>
    <property type="project" value="InterPro"/>
</dbReference>
<dbReference type="CDD" id="cd00884">
    <property type="entry name" value="beta_CA_cladeB"/>
    <property type="match status" value="1"/>
</dbReference>
<dbReference type="FunFam" id="3.40.1050.10:FF:000002">
    <property type="entry name" value="Carbonic anhydrase"/>
    <property type="match status" value="1"/>
</dbReference>
<dbReference type="Gene3D" id="3.40.1050.10">
    <property type="entry name" value="Carbonic anhydrase"/>
    <property type="match status" value="1"/>
</dbReference>
<dbReference type="InterPro" id="IPR045066">
    <property type="entry name" value="Beta_CA_cladeB"/>
</dbReference>
<dbReference type="InterPro" id="IPR001765">
    <property type="entry name" value="Carbonic_anhydrase"/>
</dbReference>
<dbReference type="InterPro" id="IPR015892">
    <property type="entry name" value="Carbonic_anhydrase_CS"/>
</dbReference>
<dbReference type="InterPro" id="IPR036874">
    <property type="entry name" value="Carbonic_anhydrase_sf"/>
</dbReference>
<dbReference type="PANTHER" id="PTHR11002:SF56">
    <property type="entry name" value="BETA CARBONIC ANHYDRASE 2, CHLOROPLASTIC"/>
    <property type="match status" value="1"/>
</dbReference>
<dbReference type="PANTHER" id="PTHR11002">
    <property type="entry name" value="CARBONIC ANHYDRASE"/>
    <property type="match status" value="1"/>
</dbReference>
<dbReference type="Pfam" id="PF00484">
    <property type="entry name" value="Pro_CA"/>
    <property type="match status" value="1"/>
</dbReference>
<dbReference type="SMART" id="SM00947">
    <property type="entry name" value="Pro_CA"/>
    <property type="match status" value="1"/>
</dbReference>
<dbReference type="SUPFAM" id="SSF53056">
    <property type="entry name" value="beta-carbonic anhydrase, cab"/>
    <property type="match status" value="1"/>
</dbReference>
<dbReference type="PROSITE" id="PS00704">
    <property type="entry name" value="PROK_CO2_ANHYDRASE_1"/>
    <property type="match status" value="1"/>
</dbReference>
<dbReference type="PROSITE" id="PS00705">
    <property type="entry name" value="PROK_CO2_ANHYDRASE_2"/>
    <property type="match status" value="1"/>
</dbReference>
<accession>P17067</accession>